<name>YOBI_BACSU</name>
<dbReference type="EMBL" id="AF027868">
    <property type="protein sequence ID" value="AAB84461.1"/>
    <property type="molecule type" value="Genomic_DNA"/>
</dbReference>
<dbReference type="EMBL" id="AL009126">
    <property type="protein sequence ID" value="CAB13789.1"/>
    <property type="molecule type" value="Genomic_DNA"/>
</dbReference>
<dbReference type="PIR" id="H69898">
    <property type="entry name" value="H69898"/>
</dbReference>
<dbReference type="RefSeq" id="NP_389778.1">
    <property type="nucleotide sequence ID" value="NC_000964.3"/>
</dbReference>
<dbReference type="RefSeq" id="WP_004399367.1">
    <property type="nucleotide sequence ID" value="NZ_OZ025638.1"/>
</dbReference>
<dbReference type="FunCoup" id="O34784">
    <property type="interactions" value="25"/>
</dbReference>
<dbReference type="STRING" id="224308.BSU18970"/>
<dbReference type="PaxDb" id="224308-BSU18970"/>
<dbReference type="EnsemblBacteria" id="CAB13789">
    <property type="protein sequence ID" value="CAB13789"/>
    <property type="gene ID" value="BSU_18970"/>
</dbReference>
<dbReference type="GeneID" id="939615"/>
<dbReference type="KEGG" id="bsu:BSU18970"/>
<dbReference type="PATRIC" id="fig|224308.179.peg.2074"/>
<dbReference type="eggNOG" id="COG5290">
    <property type="taxonomic scope" value="Bacteria"/>
</dbReference>
<dbReference type="InParanoid" id="O34784"/>
<dbReference type="OrthoDB" id="1701659at2"/>
<dbReference type="BioCyc" id="BSUB:BSU18970-MONOMER"/>
<dbReference type="Proteomes" id="UP000001570">
    <property type="component" value="Chromosome"/>
</dbReference>
<dbReference type="GO" id="GO:0005886">
    <property type="term" value="C:plasma membrane"/>
    <property type="evidence" value="ECO:0007669"/>
    <property type="project" value="UniProtKB-SubCell"/>
</dbReference>
<dbReference type="Gene3D" id="3.40.50.300">
    <property type="entry name" value="P-loop containing nucleotide triphosphate hydrolases"/>
    <property type="match status" value="1"/>
</dbReference>
<dbReference type="InterPro" id="IPR027417">
    <property type="entry name" value="P-loop_NTPase"/>
</dbReference>
<dbReference type="InterPro" id="IPR048428">
    <property type="entry name" value="YobI-NTPase"/>
</dbReference>
<dbReference type="Pfam" id="PF20693">
    <property type="entry name" value="YobI-ATPase"/>
    <property type="match status" value="1"/>
</dbReference>
<dbReference type="SUPFAM" id="SSF52540">
    <property type="entry name" value="P-loop containing nucleoside triphosphate hydrolases"/>
    <property type="match status" value="2"/>
</dbReference>
<gene>
    <name type="primary">yobI</name>
    <name type="ordered locus">BSU18970</name>
</gene>
<comment type="subcellular location">
    <subcellularLocation>
        <location evidence="2">Cell membrane</location>
        <topology evidence="2">Single-pass membrane protein</topology>
    </subcellularLocation>
</comment>
<sequence length="1201" mass="140620">MGEIKKKFVQWLEKLLIRLKEPNVKEESLFEDLSPSNDVDTDGKYSKALSWGLENKKVKNIALTGPYGSGKSSILNTFQKQYSREYSFLNISLATFNTDTDDMENKLEKSILQQMIYRVHDRTIPFSRFKRIKHIRTKSIIINLIFFFAFIIVGIYLFKPDALKGIYAETLVSRSLGTEDQQQIRLTILLALFFIVYPLLAYKRIYHFVRANLKLNKVTIANTTLEKNTGEENSSIFDKYLDEILYFFEASKYNVVIFEDLDRFNNIGIFERLRELNELINNSEQIDRRVVFIYAIKDDIFGDADTEKLTRDRTKFFDFIIPVIPIINASNSGDILKKKIKHSPYSDLINTHFLEDVTIYIDDMRVLKNIFNEFVIYQQKLSAIDLDPNKMLAMIIYKNIYPVDFSKLQYNKGLVYEIFQKKQLIIEEQIKLINAKIQQLERKLANIEVESLKSIAELNFIYLSELEISNLNSNYDINIDGEVFRGNTSNKDRFFEKLKNADTIYCYLRNRNGPATIKEIATVFGRKPNYFEREDAIKAIEKNEIQKFKKELLELEREKQEIRAQSLQVLITKMNSKDVFSDKLYEKKLLVYLLRHGYIDEMYNHYITYFYPESLSLSDIKFVFSIKNHESLPYSFELDNIGKIMSKLVGAEFKQIEVLNFHLLNYIMDHSEYRNYYDSIIERLANGSKESVTFIDGFKERAINKAAFIQSISSKWDDFWSFIELRSNYTQQKKEEYLSDILTYADIADIIRMNKESVMSFTLSKYLNLLSLVSDEEKIKELLLKLQVKFKSLDHLLNSETIYDFVVQRNLYEINIKTLSVILNDAPNITYAAVKNSDQQAVINYVNDNIDIFVEKVLLTEEIEEPEESFLELLNREDLDKRVKHAMIMKKTFAISDIGELIKELWPIVIRENKMVACWSNVITSYVEYNKKMPDFLIAFLNNPVNRKELSKNNIEAFDDKFDEAILEDISEEIINSRDITDETFEVLIASIQSWIYFPLGNVSEKRAKLLIDNDLLSLTPENFKELKLNFDTLHIQLALRNPDEFIDKQGDFSLDANDIKQLIDSNELSQFNKEIFVQHLNSNCLTDGNNDILKDTIYFINEHNLKITNELLTFLLESPTTLDTRLSLLAGQIKHIDNESITEFLTKIGEPYSEIAEKGRRIKISNNRTNKALVTALESKNYISSFKEDRERLRVNTKKK</sequence>
<feature type="chain" id="PRO_0000375909" description="Uncharacterized membrane protein YobI">
    <location>
        <begin position="1"/>
        <end position="1201"/>
    </location>
</feature>
<feature type="transmembrane region" description="Helical" evidence="1">
    <location>
        <begin position="140"/>
        <end position="160"/>
    </location>
</feature>
<feature type="coiled-coil region" evidence="1">
    <location>
        <begin position="420"/>
        <end position="459"/>
    </location>
</feature>
<feature type="coiled-coil region" evidence="1">
    <location>
        <begin position="536"/>
        <end position="574"/>
    </location>
</feature>
<protein>
    <recommendedName>
        <fullName>Uncharacterized membrane protein YobI</fullName>
    </recommendedName>
</protein>
<proteinExistence type="predicted"/>
<accession>O34784</accession>
<accession>Q796E3</accession>
<organism>
    <name type="scientific">Bacillus subtilis (strain 168)</name>
    <dbReference type="NCBI Taxonomy" id="224308"/>
    <lineage>
        <taxon>Bacteria</taxon>
        <taxon>Bacillati</taxon>
        <taxon>Bacillota</taxon>
        <taxon>Bacilli</taxon>
        <taxon>Bacillales</taxon>
        <taxon>Bacillaceae</taxon>
        <taxon>Bacillus</taxon>
    </lineage>
</organism>
<reference key="1">
    <citation type="submission" date="1997-11" db="EMBL/GenBank/DDBJ databases">
        <title>Sequence analysis of the Bacillus subtilis chromosome region between the terC and odhAB loci cloned in a yeast artificial chromosome.</title>
        <authorList>
            <person name="Lapidus A."/>
            <person name="Galleron N."/>
            <person name="Sorokin A."/>
            <person name="Ehrlich S.D."/>
        </authorList>
    </citation>
    <scope>NUCLEOTIDE SEQUENCE [GENOMIC DNA]</scope>
</reference>
<reference key="2">
    <citation type="journal article" date="1997" name="Nature">
        <title>The complete genome sequence of the Gram-positive bacterium Bacillus subtilis.</title>
        <authorList>
            <person name="Kunst F."/>
            <person name="Ogasawara N."/>
            <person name="Moszer I."/>
            <person name="Albertini A.M."/>
            <person name="Alloni G."/>
            <person name="Azevedo V."/>
            <person name="Bertero M.G."/>
            <person name="Bessieres P."/>
            <person name="Bolotin A."/>
            <person name="Borchert S."/>
            <person name="Borriss R."/>
            <person name="Boursier L."/>
            <person name="Brans A."/>
            <person name="Braun M."/>
            <person name="Brignell S.C."/>
            <person name="Bron S."/>
            <person name="Brouillet S."/>
            <person name="Bruschi C.V."/>
            <person name="Caldwell B."/>
            <person name="Capuano V."/>
            <person name="Carter N.M."/>
            <person name="Choi S.-K."/>
            <person name="Codani J.-J."/>
            <person name="Connerton I.F."/>
            <person name="Cummings N.J."/>
            <person name="Daniel R.A."/>
            <person name="Denizot F."/>
            <person name="Devine K.M."/>
            <person name="Duesterhoeft A."/>
            <person name="Ehrlich S.D."/>
            <person name="Emmerson P.T."/>
            <person name="Entian K.-D."/>
            <person name="Errington J."/>
            <person name="Fabret C."/>
            <person name="Ferrari E."/>
            <person name="Foulger D."/>
            <person name="Fritz C."/>
            <person name="Fujita M."/>
            <person name="Fujita Y."/>
            <person name="Fuma S."/>
            <person name="Galizzi A."/>
            <person name="Galleron N."/>
            <person name="Ghim S.-Y."/>
            <person name="Glaser P."/>
            <person name="Goffeau A."/>
            <person name="Golightly E.J."/>
            <person name="Grandi G."/>
            <person name="Guiseppi G."/>
            <person name="Guy B.J."/>
            <person name="Haga K."/>
            <person name="Haiech J."/>
            <person name="Harwood C.R."/>
            <person name="Henaut A."/>
            <person name="Hilbert H."/>
            <person name="Holsappel S."/>
            <person name="Hosono S."/>
            <person name="Hullo M.-F."/>
            <person name="Itaya M."/>
            <person name="Jones L.-M."/>
            <person name="Joris B."/>
            <person name="Karamata D."/>
            <person name="Kasahara Y."/>
            <person name="Klaerr-Blanchard M."/>
            <person name="Klein C."/>
            <person name="Kobayashi Y."/>
            <person name="Koetter P."/>
            <person name="Koningstein G."/>
            <person name="Krogh S."/>
            <person name="Kumano M."/>
            <person name="Kurita K."/>
            <person name="Lapidus A."/>
            <person name="Lardinois S."/>
            <person name="Lauber J."/>
            <person name="Lazarevic V."/>
            <person name="Lee S.-M."/>
            <person name="Levine A."/>
            <person name="Liu H."/>
            <person name="Masuda S."/>
            <person name="Mauel C."/>
            <person name="Medigue C."/>
            <person name="Medina N."/>
            <person name="Mellado R.P."/>
            <person name="Mizuno M."/>
            <person name="Moestl D."/>
            <person name="Nakai S."/>
            <person name="Noback M."/>
            <person name="Noone D."/>
            <person name="O'Reilly M."/>
            <person name="Ogawa K."/>
            <person name="Ogiwara A."/>
            <person name="Oudega B."/>
            <person name="Park S.-H."/>
            <person name="Parro V."/>
            <person name="Pohl T.M."/>
            <person name="Portetelle D."/>
            <person name="Porwollik S."/>
            <person name="Prescott A.M."/>
            <person name="Presecan E."/>
            <person name="Pujic P."/>
            <person name="Purnelle B."/>
            <person name="Rapoport G."/>
            <person name="Rey M."/>
            <person name="Reynolds S."/>
            <person name="Rieger M."/>
            <person name="Rivolta C."/>
            <person name="Rocha E."/>
            <person name="Roche B."/>
            <person name="Rose M."/>
            <person name="Sadaie Y."/>
            <person name="Sato T."/>
            <person name="Scanlan E."/>
            <person name="Schleich S."/>
            <person name="Schroeter R."/>
            <person name="Scoffone F."/>
            <person name="Sekiguchi J."/>
            <person name="Sekowska A."/>
            <person name="Seror S.J."/>
            <person name="Serror P."/>
            <person name="Shin B.-S."/>
            <person name="Soldo B."/>
            <person name="Sorokin A."/>
            <person name="Tacconi E."/>
            <person name="Takagi T."/>
            <person name="Takahashi H."/>
            <person name="Takemaru K."/>
            <person name="Takeuchi M."/>
            <person name="Tamakoshi A."/>
            <person name="Tanaka T."/>
            <person name="Terpstra P."/>
            <person name="Tognoni A."/>
            <person name="Tosato V."/>
            <person name="Uchiyama S."/>
            <person name="Vandenbol M."/>
            <person name="Vannier F."/>
            <person name="Vassarotti A."/>
            <person name="Viari A."/>
            <person name="Wambutt R."/>
            <person name="Wedler E."/>
            <person name="Wedler H."/>
            <person name="Weitzenegger T."/>
            <person name="Winters P."/>
            <person name="Wipat A."/>
            <person name="Yamamoto H."/>
            <person name="Yamane K."/>
            <person name="Yasumoto K."/>
            <person name="Yata K."/>
            <person name="Yoshida K."/>
            <person name="Yoshikawa H.-F."/>
            <person name="Zumstein E."/>
            <person name="Yoshikawa H."/>
            <person name="Danchin A."/>
        </authorList>
    </citation>
    <scope>NUCLEOTIDE SEQUENCE [LARGE SCALE GENOMIC DNA]</scope>
    <source>
        <strain>168</strain>
    </source>
</reference>
<keyword id="KW-1003">Cell membrane</keyword>
<keyword id="KW-0175">Coiled coil</keyword>
<keyword id="KW-0472">Membrane</keyword>
<keyword id="KW-1185">Reference proteome</keyword>
<keyword id="KW-0812">Transmembrane</keyword>
<keyword id="KW-1133">Transmembrane helix</keyword>
<evidence type="ECO:0000255" key="1"/>
<evidence type="ECO:0000305" key="2"/>